<proteinExistence type="inferred from homology"/>
<comment type="similarity">
    <text evidence="1">Belongs to the UPF0301 (AlgH) family.</text>
</comment>
<reference key="1">
    <citation type="journal article" date="2007" name="PLoS Genet.">
        <title>The complete genome sequence of Yersinia pseudotuberculosis IP31758, the causative agent of Far East scarlet-like fever.</title>
        <authorList>
            <person name="Eppinger M."/>
            <person name="Rosovitz M.J."/>
            <person name="Fricke W.F."/>
            <person name="Rasko D.A."/>
            <person name="Kokorina G."/>
            <person name="Fayolle C."/>
            <person name="Lindler L.E."/>
            <person name="Carniel E."/>
            <person name="Ravel J."/>
        </authorList>
    </citation>
    <scope>NUCLEOTIDE SEQUENCE [LARGE SCALE GENOMIC DNA]</scope>
    <source>
        <strain>IP 31758</strain>
    </source>
</reference>
<sequence length="187" mass="20667">MNLQHHFLIAMPSLQDPQFKRSVIYICEHDEKGAMGLVINKPLEQLTVETILEKLKIKSPSRDPAIRLDNVVLAGGPLAEDRGFILHSPQEGFASSIHISPETMITTSKDVLETLGTSGQPKNLLVALGYASWRQGQLEQELLDNVWLTTEADTHILFNTPIAERWQAAANKLGINIFNIAPQAGHA</sequence>
<feature type="chain" id="PRO_1000062201" description="UPF0301 protein YpsIP31758_0835">
    <location>
        <begin position="1"/>
        <end position="187"/>
    </location>
</feature>
<evidence type="ECO:0000255" key="1">
    <source>
        <dbReference type="HAMAP-Rule" id="MF_00758"/>
    </source>
</evidence>
<protein>
    <recommendedName>
        <fullName evidence="1">UPF0301 protein YpsIP31758_0835</fullName>
    </recommendedName>
</protein>
<accession>A7FEZ1</accession>
<dbReference type="EMBL" id="CP000720">
    <property type="protein sequence ID" value="ABS47994.1"/>
    <property type="molecule type" value="Genomic_DNA"/>
</dbReference>
<dbReference type="RefSeq" id="WP_011192971.1">
    <property type="nucleotide sequence ID" value="NC_009708.1"/>
</dbReference>
<dbReference type="SMR" id="A7FEZ1"/>
<dbReference type="KEGG" id="ypi:YpsIP31758_0835"/>
<dbReference type="HOGENOM" id="CLU_057596_1_0_6"/>
<dbReference type="Proteomes" id="UP000002412">
    <property type="component" value="Chromosome"/>
</dbReference>
<dbReference type="GO" id="GO:0005829">
    <property type="term" value="C:cytosol"/>
    <property type="evidence" value="ECO:0007669"/>
    <property type="project" value="TreeGrafter"/>
</dbReference>
<dbReference type="Gene3D" id="3.40.1740.10">
    <property type="entry name" value="VC0467-like"/>
    <property type="match status" value="1"/>
</dbReference>
<dbReference type="Gene3D" id="3.30.70.1300">
    <property type="entry name" value="VC0467-like domains"/>
    <property type="match status" value="1"/>
</dbReference>
<dbReference type="HAMAP" id="MF_00758">
    <property type="entry name" value="UPF0301"/>
    <property type="match status" value="1"/>
</dbReference>
<dbReference type="InterPro" id="IPR003774">
    <property type="entry name" value="AlgH-like"/>
</dbReference>
<dbReference type="NCBIfam" id="NF001266">
    <property type="entry name" value="PRK00228.1-1"/>
    <property type="match status" value="1"/>
</dbReference>
<dbReference type="PANTHER" id="PTHR30327">
    <property type="entry name" value="UNCHARACTERIZED PROTEIN YQGE"/>
    <property type="match status" value="1"/>
</dbReference>
<dbReference type="PANTHER" id="PTHR30327:SF1">
    <property type="entry name" value="UPF0301 PROTEIN YQGE"/>
    <property type="match status" value="1"/>
</dbReference>
<dbReference type="Pfam" id="PF02622">
    <property type="entry name" value="DUF179"/>
    <property type="match status" value="1"/>
</dbReference>
<dbReference type="SUPFAM" id="SSF143456">
    <property type="entry name" value="VC0467-like"/>
    <property type="match status" value="1"/>
</dbReference>
<organism>
    <name type="scientific">Yersinia pseudotuberculosis serotype O:1b (strain IP 31758)</name>
    <dbReference type="NCBI Taxonomy" id="349747"/>
    <lineage>
        <taxon>Bacteria</taxon>
        <taxon>Pseudomonadati</taxon>
        <taxon>Pseudomonadota</taxon>
        <taxon>Gammaproteobacteria</taxon>
        <taxon>Enterobacterales</taxon>
        <taxon>Yersiniaceae</taxon>
        <taxon>Yersinia</taxon>
    </lineage>
</organism>
<name>Y835_YERP3</name>
<gene>
    <name type="ordered locus">YpsIP31758_0835</name>
</gene>